<reference key="1">
    <citation type="submission" date="2008-10" db="EMBL/GenBank/DDBJ databases">
        <title>The complete genome sequence of Helicobacter pylori strain P12.</title>
        <authorList>
            <person name="Fischer W."/>
            <person name="Windhager L."/>
            <person name="Karnholz A."/>
            <person name="Zeiller M."/>
            <person name="Zimmer R."/>
            <person name="Haas R."/>
        </authorList>
    </citation>
    <scope>NUCLEOTIDE SEQUENCE [LARGE SCALE GENOMIC DNA]</scope>
    <source>
        <strain>P12</strain>
    </source>
</reference>
<gene>
    <name evidence="1" type="primary">rnc</name>
    <name type="ordered locus">HPP12_0675</name>
</gene>
<protein>
    <recommendedName>
        <fullName evidence="1">Ribonuclease 3</fullName>
        <ecNumber evidence="1">3.1.26.3</ecNumber>
    </recommendedName>
    <alternativeName>
        <fullName evidence="1">Ribonuclease III</fullName>
        <shortName evidence="1">RNase III</shortName>
    </alternativeName>
</protein>
<dbReference type="EC" id="3.1.26.3" evidence="1"/>
<dbReference type="EMBL" id="CP001217">
    <property type="protein sequence ID" value="ACJ07828.1"/>
    <property type="molecule type" value="Genomic_DNA"/>
</dbReference>
<dbReference type="SMR" id="B6JLQ0"/>
<dbReference type="KEGG" id="hpp:HPP12_0675"/>
<dbReference type="HOGENOM" id="CLU_000907_1_3_7"/>
<dbReference type="Proteomes" id="UP000008198">
    <property type="component" value="Chromosome"/>
</dbReference>
<dbReference type="GO" id="GO:0005737">
    <property type="term" value="C:cytoplasm"/>
    <property type="evidence" value="ECO:0007669"/>
    <property type="project" value="UniProtKB-SubCell"/>
</dbReference>
<dbReference type="GO" id="GO:0003725">
    <property type="term" value="F:double-stranded RNA binding"/>
    <property type="evidence" value="ECO:0007669"/>
    <property type="project" value="TreeGrafter"/>
</dbReference>
<dbReference type="GO" id="GO:0046872">
    <property type="term" value="F:metal ion binding"/>
    <property type="evidence" value="ECO:0007669"/>
    <property type="project" value="UniProtKB-KW"/>
</dbReference>
<dbReference type="GO" id="GO:0004525">
    <property type="term" value="F:ribonuclease III activity"/>
    <property type="evidence" value="ECO:0007669"/>
    <property type="project" value="UniProtKB-UniRule"/>
</dbReference>
<dbReference type="GO" id="GO:0019843">
    <property type="term" value="F:rRNA binding"/>
    <property type="evidence" value="ECO:0007669"/>
    <property type="project" value="UniProtKB-KW"/>
</dbReference>
<dbReference type="GO" id="GO:0006397">
    <property type="term" value="P:mRNA processing"/>
    <property type="evidence" value="ECO:0007669"/>
    <property type="project" value="UniProtKB-UniRule"/>
</dbReference>
<dbReference type="GO" id="GO:0010468">
    <property type="term" value="P:regulation of gene expression"/>
    <property type="evidence" value="ECO:0007669"/>
    <property type="project" value="TreeGrafter"/>
</dbReference>
<dbReference type="GO" id="GO:0006364">
    <property type="term" value="P:rRNA processing"/>
    <property type="evidence" value="ECO:0007669"/>
    <property type="project" value="UniProtKB-UniRule"/>
</dbReference>
<dbReference type="GO" id="GO:0008033">
    <property type="term" value="P:tRNA processing"/>
    <property type="evidence" value="ECO:0007669"/>
    <property type="project" value="UniProtKB-KW"/>
</dbReference>
<dbReference type="CDD" id="cd10845">
    <property type="entry name" value="DSRM_RNAse_III_family"/>
    <property type="match status" value="1"/>
</dbReference>
<dbReference type="CDD" id="cd00593">
    <property type="entry name" value="RIBOc"/>
    <property type="match status" value="1"/>
</dbReference>
<dbReference type="FunFam" id="1.10.1520.10:FF:000001">
    <property type="entry name" value="Ribonuclease 3"/>
    <property type="match status" value="1"/>
</dbReference>
<dbReference type="FunFam" id="3.30.160.20:FF:000003">
    <property type="entry name" value="Ribonuclease 3"/>
    <property type="match status" value="1"/>
</dbReference>
<dbReference type="Gene3D" id="3.30.160.20">
    <property type="match status" value="1"/>
</dbReference>
<dbReference type="Gene3D" id="1.10.1520.10">
    <property type="entry name" value="Ribonuclease III domain"/>
    <property type="match status" value="1"/>
</dbReference>
<dbReference type="HAMAP" id="MF_00104">
    <property type="entry name" value="RNase_III"/>
    <property type="match status" value="1"/>
</dbReference>
<dbReference type="InterPro" id="IPR014720">
    <property type="entry name" value="dsRBD_dom"/>
</dbReference>
<dbReference type="InterPro" id="IPR011907">
    <property type="entry name" value="RNase_III"/>
</dbReference>
<dbReference type="InterPro" id="IPR000999">
    <property type="entry name" value="RNase_III_dom"/>
</dbReference>
<dbReference type="InterPro" id="IPR036389">
    <property type="entry name" value="RNase_III_sf"/>
</dbReference>
<dbReference type="NCBIfam" id="TIGR02191">
    <property type="entry name" value="RNaseIII"/>
    <property type="match status" value="1"/>
</dbReference>
<dbReference type="PANTHER" id="PTHR11207:SF0">
    <property type="entry name" value="RIBONUCLEASE 3"/>
    <property type="match status" value="1"/>
</dbReference>
<dbReference type="PANTHER" id="PTHR11207">
    <property type="entry name" value="RIBONUCLEASE III"/>
    <property type="match status" value="1"/>
</dbReference>
<dbReference type="Pfam" id="PF00035">
    <property type="entry name" value="dsrm"/>
    <property type="match status" value="1"/>
</dbReference>
<dbReference type="Pfam" id="PF14622">
    <property type="entry name" value="Ribonucleas_3_3"/>
    <property type="match status" value="1"/>
</dbReference>
<dbReference type="SMART" id="SM00358">
    <property type="entry name" value="DSRM"/>
    <property type="match status" value="1"/>
</dbReference>
<dbReference type="SMART" id="SM00535">
    <property type="entry name" value="RIBOc"/>
    <property type="match status" value="1"/>
</dbReference>
<dbReference type="SUPFAM" id="SSF54768">
    <property type="entry name" value="dsRNA-binding domain-like"/>
    <property type="match status" value="1"/>
</dbReference>
<dbReference type="SUPFAM" id="SSF69065">
    <property type="entry name" value="RNase III domain-like"/>
    <property type="match status" value="1"/>
</dbReference>
<dbReference type="PROSITE" id="PS50137">
    <property type="entry name" value="DS_RBD"/>
    <property type="match status" value="1"/>
</dbReference>
<dbReference type="PROSITE" id="PS00517">
    <property type="entry name" value="RNASE_3_1"/>
    <property type="match status" value="1"/>
</dbReference>
<dbReference type="PROSITE" id="PS50142">
    <property type="entry name" value="RNASE_3_2"/>
    <property type="match status" value="1"/>
</dbReference>
<evidence type="ECO:0000255" key="1">
    <source>
        <dbReference type="HAMAP-Rule" id="MF_00104"/>
    </source>
</evidence>
<sequence length="239" mass="27261">MKNKRSQNSPYVTPNNPYLTLEKALGYSFKDKRLLEQALTHKSCKLALNNERLEFLGDAVLGLVIGELLYHKFYQYDEGKLSKLRASIVSAHGFTKLAKAIALQDYLRVSSSEEISNGREKPSILSSAFEALMAGVYLEAGLAKVRKIIQNLLNRAYKRLDLEHLFMDYKTALQELTQAQFCVIPTYQLLQEKGPDHHKEFEMALYIQDKMYATAKGKSKKEAEQQCAYQALQKLKEAK</sequence>
<organism>
    <name type="scientific">Helicobacter pylori (strain P12)</name>
    <dbReference type="NCBI Taxonomy" id="570508"/>
    <lineage>
        <taxon>Bacteria</taxon>
        <taxon>Pseudomonadati</taxon>
        <taxon>Campylobacterota</taxon>
        <taxon>Epsilonproteobacteria</taxon>
        <taxon>Campylobacterales</taxon>
        <taxon>Helicobacteraceae</taxon>
        <taxon>Helicobacter</taxon>
    </lineage>
</organism>
<name>RNC_HELP2</name>
<comment type="function">
    <text evidence="1">Digests double-stranded RNA. Involved in the processing of primary rRNA transcript to yield the immediate precursors to the large and small rRNAs (23S and 16S). Processes some mRNAs, and tRNAs when they are encoded in the rRNA operon. Processes pre-crRNA and tracrRNA of type II CRISPR loci if present in the organism.</text>
</comment>
<comment type="catalytic activity">
    <reaction evidence="1">
        <text>Endonucleolytic cleavage to 5'-phosphomonoester.</text>
        <dbReference type="EC" id="3.1.26.3"/>
    </reaction>
</comment>
<comment type="cofactor">
    <cofactor evidence="1">
        <name>Mg(2+)</name>
        <dbReference type="ChEBI" id="CHEBI:18420"/>
    </cofactor>
</comment>
<comment type="subunit">
    <text evidence="1">Homodimer.</text>
</comment>
<comment type="subcellular location">
    <subcellularLocation>
        <location evidence="1">Cytoplasm</location>
    </subcellularLocation>
</comment>
<comment type="similarity">
    <text evidence="1">Belongs to the ribonuclease III family.</text>
</comment>
<feature type="chain" id="PRO_1000094112" description="Ribonuclease 3">
    <location>
        <begin position="1"/>
        <end position="239"/>
    </location>
</feature>
<feature type="domain" description="RNase III" evidence="1">
    <location>
        <begin position="18"/>
        <end position="141"/>
    </location>
</feature>
<feature type="domain" description="DRBM" evidence="1">
    <location>
        <begin position="168"/>
        <end position="237"/>
    </location>
</feature>
<feature type="active site" evidence="1">
    <location>
        <position position="58"/>
    </location>
</feature>
<feature type="active site" evidence="1">
    <location>
        <position position="130"/>
    </location>
</feature>
<feature type="binding site" evidence="1">
    <location>
        <position position="54"/>
    </location>
    <ligand>
        <name>Mg(2+)</name>
        <dbReference type="ChEBI" id="CHEBI:18420"/>
    </ligand>
</feature>
<feature type="binding site" evidence="1">
    <location>
        <position position="127"/>
    </location>
    <ligand>
        <name>Mg(2+)</name>
        <dbReference type="ChEBI" id="CHEBI:18420"/>
    </ligand>
</feature>
<feature type="binding site" evidence="1">
    <location>
        <position position="130"/>
    </location>
    <ligand>
        <name>Mg(2+)</name>
        <dbReference type="ChEBI" id="CHEBI:18420"/>
    </ligand>
</feature>
<accession>B6JLQ0</accession>
<proteinExistence type="inferred from homology"/>
<keyword id="KW-0963">Cytoplasm</keyword>
<keyword id="KW-0255">Endonuclease</keyword>
<keyword id="KW-0378">Hydrolase</keyword>
<keyword id="KW-0460">Magnesium</keyword>
<keyword id="KW-0479">Metal-binding</keyword>
<keyword id="KW-0507">mRNA processing</keyword>
<keyword id="KW-0540">Nuclease</keyword>
<keyword id="KW-0694">RNA-binding</keyword>
<keyword id="KW-0698">rRNA processing</keyword>
<keyword id="KW-0699">rRNA-binding</keyword>
<keyword id="KW-0819">tRNA processing</keyword>